<reference key="1">
    <citation type="journal article" date="1997" name="Nature">
        <title>The complete genome sequence of the hyperthermophilic, sulphate-reducing archaeon Archaeoglobus fulgidus.</title>
        <authorList>
            <person name="Klenk H.-P."/>
            <person name="Clayton R.A."/>
            <person name="Tomb J.-F."/>
            <person name="White O."/>
            <person name="Nelson K.E."/>
            <person name="Ketchum K.A."/>
            <person name="Dodson R.J."/>
            <person name="Gwinn M.L."/>
            <person name="Hickey E.K."/>
            <person name="Peterson J.D."/>
            <person name="Richardson D.L."/>
            <person name="Kerlavage A.R."/>
            <person name="Graham D.E."/>
            <person name="Kyrpides N.C."/>
            <person name="Fleischmann R.D."/>
            <person name="Quackenbush J."/>
            <person name="Lee N.H."/>
            <person name="Sutton G.G."/>
            <person name="Gill S.R."/>
            <person name="Kirkness E.F."/>
            <person name="Dougherty B.A."/>
            <person name="McKenney K."/>
            <person name="Adams M.D."/>
            <person name="Loftus B.J."/>
            <person name="Peterson S.N."/>
            <person name="Reich C.I."/>
            <person name="McNeil L.K."/>
            <person name="Badger J.H."/>
            <person name="Glodek A."/>
            <person name="Zhou L."/>
            <person name="Overbeek R."/>
            <person name="Gocayne J.D."/>
            <person name="Weidman J.F."/>
            <person name="McDonald L.A."/>
            <person name="Utterback T.R."/>
            <person name="Cotton M.D."/>
            <person name="Spriggs T."/>
            <person name="Artiach P."/>
            <person name="Kaine B.P."/>
            <person name="Sykes S.M."/>
            <person name="Sadow P.W."/>
            <person name="D'Andrea K.P."/>
            <person name="Bowman C."/>
            <person name="Fujii C."/>
            <person name="Garland S.A."/>
            <person name="Mason T.M."/>
            <person name="Olsen G.J."/>
            <person name="Fraser C.M."/>
            <person name="Smith H.O."/>
            <person name="Woese C.R."/>
            <person name="Venter J.C."/>
        </authorList>
    </citation>
    <scope>NUCLEOTIDE SEQUENCE [LARGE SCALE GENOMIC DNA]</scope>
    <source>
        <strain>ATCC 49558 / DSM 4304 / JCM 9628 / NBRC 100126 / VC-16</strain>
    </source>
</reference>
<proteinExistence type="predicted"/>
<organism>
    <name type="scientific">Archaeoglobus fulgidus (strain ATCC 49558 / DSM 4304 / JCM 9628 / NBRC 100126 / VC-16)</name>
    <dbReference type="NCBI Taxonomy" id="224325"/>
    <lineage>
        <taxon>Archaea</taxon>
        <taxon>Methanobacteriati</taxon>
        <taxon>Methanobacteriota</taxon>
        <taxon>Archaeoglobi</taxon>
        <taxon>Archaeoglobales</taxon>
        <taxon>Archaeoglobaceae</taxon>
        <taxon>Archaeoglobus</taxon>
    </lineage>
</organism>
<protein>
    <recommendedName>
        <fullName>Uncharacterized protein AF_0686</fullName>
    </recommendedName>
</protein>
<sequence length="222" mass="25944">MSEKTHWNRREMAEKGFTFVFPYSEGLKRVRELLNTDYDPAVLWVWGTMQARAVIETLKACESDFGEKGQKVVYEALKKVGREVAEQMISSSKFEGMDEAELLSFFATIVNTIAYASIEKPWVESEERVGFDILWCPHQDVYSAFDCRVQRYFVQGMLEALREKYEKETGKKLKWQVKFETTIPAGADVCRFVIWRSESEDNEWEKYTELLNRKALNGKNIL</sequence>
<feature type="chain" id="PRO_0000127905" description="Uncharacterized protein AF_0686">
    <location>
        <begin position="1"/>
        <end position="222"/>
    </location>
</feature>
<name>Y686_ARCFU</name>
<gene>
    <name type="ordered locus">AF_0686</name>
</gene>
<dbReference type="EMBL" id="AE000782">
    <property type="protein sequence ID" value="AAB90552.1"/>
    <property type="molecule type" value="Genomic_DNA"/>
</dbReference>
<dbReference type="PIR" id="F69335">
    <property type="entry name" value="F69335"/>
</dbReference>
<dbReference type="RefSeq" id="WP_010878189.1">
    <property type="nucleotide sequence ID" value="NC_000917.1"/>
</dbReference>
<dbReference type="STRING" id="224325.AF_0686"/>
<dbReference type="PaxDb" id="224325-AF_0686"/>
<dbReference type="EnsemblBacteria" id="AAB90552">
    <property type="protein sequence ID" value="AAB90552"/>
    <property type="gene ID" value="AF_0686"/>
</dbReference>
<dbReference type="KEGG" id="afu:AF_0686"/>
<dbReference type="HOGENOM" id="CLU_1242972_0_0_2"/>
<dbReference type="Proteomes" id="UP000002199">
    <property type="component" value="Chromosome"/>
</dbReference>
<accession>O29571</accession>
<keyword id="KW-1185">Reference proteome</keyword>